<reference key="1">
    <citation type="submission" date="2007-04" db="EMBL/GenBank/DDBJ databases">
        <title>Complete sequence of chromosome of Rhodobacter sphaeroides ATCC 17025.</title>
        <authorList>
            <consortium name="US DOE Joint Genome Institute"/>
            <person name="Copeland A."/>
            <person name="Lucas S."/>
            <person name="Lapidus A."/>
            <person name="Barry K."/>
            <person name="Detter J.C."/>
            <person name="Glavina del Rio T."/>
            <person name="Hammon N."/>
            <person name="Israni S."/>
            <person name="Dalin E."/>
            <person name="Tice H."/>
            <person name="Pitluck S."/>
            <person name="Chertkov O."/>
            <person name="Brettin T."/>
            <person name="Bruce D."/>
            <person name="Han C."/>
            <person name="Schmutz J."/>
            <person name="Larimer F."/>
            <person name="Land M."/>
            <person name="Hauser L."/>
            <person name="Kyrpides N."/>
            <person name="Kim E."/>
            <person name="Richardson P."/>
            <person name="Mackenzie C."/>
            <person name="Choudhary M."/>
            <person name="Donohue T.J."/>
            <person name="Kaplan S."/>
        </authorList>
    </citation>
    <scope>NUCLEOTIDE SEQUENCE [LARGE SCALE GENOMIC DNA]</scope>
    <source>
        <strain>ATCC 17025 / ATH 2.4.3</strain>
    </source>
</reference>
<comment type="function">
    <text evidence="1">DNA-dependent RNA polymerase catalyzes the transcription of DNA into RNA using the four ribonucleoside triphosphates as substrates.</text>
</comment>
<comment type="catalytic activity">
    <reaction evidence="1">
        <text>RNA(n) + a ribonucleoside 5'-triphosphate = RNA(n+1) + diphosphate</text>
        <dbReference type="Rhea" id="RHEA:21248"/>
        <dbReference type="Rhea" id="RHEA-COMP:14527"/>
        <dbReference type="Rhea" id="RHEA-COMP:17342"/>
        <dbReference type="ChEBI" id="CHEBI:33019"/>
        <dbReference type="ChEBI" id="CHEBI:61557"/>
        <dbReference type="ChEBI" id="CHEBI:140395"/>
        <dbReference type="EC" id="2.7.7.6"/>
    </reaction>
</comment>
<comment type="subunit">
    <text evidence="1">Homodimer. The RNAP catalytic core consists of 2 alpha, 1 beta, 1 beta' and 1 omega subunit. When a sigma factor is associated with the core the holoenzyme is formed, which can initiate transcription.</text>
</comment>
<comment type="domain">
    <text evidence="1">The N-terminal domain is essential for RNAP assembly and basal transcription, whereas the C-terminal domain is involved in interaction with transcriptional regulators and with upstream promoter elements.</text>
</comment>
<comment type="similarity">
    <text evidence="1">Belongs to the RNA polymerase alpha chain family.</text>
</comment>
<sequence length="338" mass="37081">MIHKNWAELIKPTQLVVKPGADPARVATVIAEPLERGFGLTLGNALRRVLLSSLQGAAITSVQIDNVLHEFSSVAGVREDVTDIVLNLKGVSIKMDVEGPKRLSISAKGPGVVTAGDISESNGIEILNKDHVICHLDEGADVFMELTVNTGKGYVAADKNRPEDAPIGLIPIDAIYSPVKKVSYEVTPTREGQVLDYDKLTMRVETDGGLTPEDAVAYAARILQDQLSIFVNFEEPESATRHDVEDGLEFNPLLLKKVDELELSVRSANCLKNDNIVYIGDLIQKTEAEMLRTPNFGRKSLNEIKEVLSGMGLHLGMDVEDWPPENIEDLAKRFEDQF</sequence>
<feature type="chain" id="PRO_1000007690" description="DNA-directed RNA polymerase subunit alpha">
    <location>
        <begin position="1"/>
        <end position="338"/>
    </location>
</feature>
<feature type="region of interest" description="Alpha N-terminal domain (alpha-NTD)" evidence="1">
    <location>
        <begin position="1"/>
        <end position="234"/>
    </location>
</feature>
<feature type="region of interest" description="Alpha C-terminal domain (alpha-CTD)" evidence="1">
    <location>
        <begin position="250"/>
        <end position="338"/>
    </location>
</feature>
<protein>
    <recommendedName>
        <fullName evidence="1">DNA-directed RNA polymerase subunit alpha</fullName>
        <shortName evidence="1">RNAP subunit alpha</shortName>
        <ecNumber evidence="1">2.7.7.6</ecNumber>
    </recommendedName>
    <alternativeName>
        <fullName evidence="1">RNA polymerase subunit alpha</fullName>
    </alternativeName>
    <alternativeName>
        <fullName evidence="1">Transcriptase subunit alpha</fullName>
    </alternativeName>
</protein>
<organism>
    <name type="scientific">Cereibacter sphaeroides (strain ATCC 17025 / ATH 2.4.3)</name>
    <name type="common">Rhodobacter sphaeroides</name>
    <dbReference type="NCBI Taxonomy" id="349102"/>
    <lineage>
        <taxon>Bacteria</taxon>
        <taxon>Pseudomonadati</taxon>
        <taxon>Pseudomonadota</taxon>
        <taxon>Alphaproteobacteria</taxon>
        <taxon>Rhodobacterales</taxon>
        <taxon>Paracoccaceae</taxon>
        <taxon>Cereibacter</taxon>
    </lineage>
</organism>
<accession>A4WVI4</accession>
<dbReference type="EC" id="2.7.7.6" evidence="1"/>
<dbReference type="EMBL" id="CP000661">
    <property type="protein sequence ID" value="ABP71398.1"/>
    <property type="molecule type" value="Genomic_DNA"/>
</dbReference>
<dbReference type="SMR" id="A4WVI4"/>
<dbReference type="STRING" id="349102.Rsph17025_2510"/>
<dbReference type="KEGG" id="rsq:Rsph17025_2510"/>
<dbReference type="eggNOG" id="COG0202">
    <property type="taxonomic scope" value="Bacteria"/>
</dbReference>
<dbReference type="HOGENOM" id="CLU_053084_0_1_5"/>
<dbReference type="BioCyc" id="RSPH349102:G1G8M-2588-MONOMER"/>
<dbReference type="GO" id="GO:0005737">
    <property type="term" value="C:cytoplasm"/>
    <property type="evidence" value="ECO:0007669"/>
    <property type="project" value="UniProtKB-ARBA"/>
</dbReference>
<dbReference type="GO" id="GO:0000428">
    <property type="term" value="C:DNA-directed RNA polymerase complex"/>
    <property type="evidence" value="ECO:0007669"/>
    <property type="project" value="UniProtKB-KW"/>
</dbReference>
<dbReference type="GO" id="GO:0003677">
    <property type="term" value="F:DNA binding"/>
    <property type="evidence" value="ECO:0007669"/>
    <property type="project" value="UniProtKB-UniRule"/>
</dbReference>
<dbReference type="GO" id="GO:0003899">
    <property type="term" value="F:DNA-directed RNA polymerase activity"/>
    <property type="evidence" value="ECO:0007669"/>
    <property type="project" value="UniProtKB-UniRule"/>
</dbReference>
<dbReference type="GO" id="GO:0046983">
    <property type="term" value="F:protein dimerization activity"/>
    <property type="evidence" value="ECO:0007669"/>
    <property type="project" value="InterPro"/>
</dbReference>
<dbReference type="GO" id="GO:0006351">
    <property type="term" value="P:DNA-templated transcription"/>
    <property type="evidence" value="ECO:0007669"/>
    <property type="project" value="UniProtKB-UniRule"/>
</dbReference>
<dbReference type="CDD" id="cd06928">
    <property type="entry name" value="RNAP_alpha_NTD"/>
    <property type="match status" value="1"/>
</dbReference>
<dbReference type="FunFam" id="1.10.150.20:FF:000001">
    <property type="entry name" value="DNA-directed RNA polymerase subunit alpha"/>
    <property type="match status" value="1"/>
</dbReference>
<dbReference type="FunFam" id="2.170.120.12:FF:000001">
    <property type="entry name" value="DNA-directed RNA polymerase subunit alpha"/>
    <property type="match status" value="1"/>
</dbReference>
<dbReference type="Gene3D" id="1.10.150.20">
    <property type="entry name" value="5' to 3' exonuclease, C-terminal subdomain"/>
    <property type="match status" value="1"/>
</dbReference>
<dbReference type="Gene3D" id="2.170.120.12">
    <property type="entry name" value="DNA-directed RNA polymerase, insert domain"/>
    <property type="match status" value="1"/>
</dbReference>
<dbReference type="Gene3D" id="3.30.1360.10">
    <property type="entry name" value="RNA polymerase, RBP11-like subunit"/>
    <property type="match status" value="1"/>
</dbReference>
<dbReference type="HAMAP" id="MF_00059">
    <property type="entry name" value="RNApol_bact_RpoA"/>
    <property type="match status" value="1"/>
</dbReference>
<dbReference type="InterPro" id="IPR011262">
    <property type="entry name" value="DNA-dir_RNA_pol_insert"/>
</dbReference>
<dbReference type="InterPro" id="IPR011263">
    <property type="entry name" value="DNA-dir_RNA_pol_RpoA/D/Rpb3"/>
</dbReference>
<dbReference type="InterPro" id="IPR011773">
    <property type="entry name" value="DNA-dir_RpoA"/>
</dbReference>
<dbReference type="InterPro" id="IPR036603">
    <property type="entry name" value="RBP11-like"/>
</dbReference>
<dbReference type="InterPro" id="IPR011260">
    <property type="entry name" value="RNAP_asu_C"/>
</dbReference>
<dbReference type="InterPro" id="IPR036643">
    <property type="entry name" value="RNApol_insert_sf"/>
</dbReference>
<dbReference type="NCBIfam" id="NF003513">
    <property type="entry name" value="PRK05182.1-2"/>
    <property type="match status" value="1"/>
</dbReference>
<dbReference type="NCBIfam" id="NF003519">
    <property type="entry name" value="PRK05182.2-5"/>
    <property type="match status" value="1"/>
</dbReference>
<dbReference type="NCBIfam" id="TIGR02027">
    <property type="entry name" value="rpoA"/>
    <property type="match status" value="1"/>
</dbReference>
<dbReference type="Pfam" id="PF01000">
    <property type="entry name" value="RNA_pol_A_bac"/>
    <property type="match status" value="1"/>
</dbReference>
<dbReference type="Pfam" id="PF03118">
    <property type="entry name" value="RNA_pol_A_CTD"/>
    <property type="match status" value="1"/>
</dbReference>
<dbReference type="Pfam" id="PF01193">
    <property type="entry name" value="RNA_pol_L"/>
    <property type="match status" value="1"/>
</dbReference>
<dbReference type="SMART" id="SM00662">
    <property type="entry name" value="RPOLD"/>
    <property type="match status" value="1"/>
</dbReference>
<dbReference type="SUPFAM" id="SSF47789">
    <property type="entry name" value="C-terminal domain of RNA polymerase alpha subunit"/>
    <property type="match status" value="1"/>
</dbReference>
<dbReference type="SUPFAM" id="SSF56553">
    <property type="entry name" value="Insert subdomain of RNA polymerase alpha subunit"/>
    <property type="match status" value="1"/>
</dbReference>
<dbReference type="SUPFAM" id="SSF55257">
    <property type="entry name" value="RBP11-like subunits of RNA polymerase"/>
    <property type="match status" value="1"/>
</dbReference>
<keyword id="KW-0240">DNA-directed RNA polymerase</keyword>
<keyword id="KW-0548">Nucleotidyltransferase</keyword>
<keyword id="KW-0804">Transcription</keyword>
<keyword id="KW-0808">Transferase</keyword>
<proteinExistence type="inferred from homology"/>
<gene>
    <name evidence="1" type="primary">rpoA</name>
    <name type="ordered locus">Rsph17025_2510</name>
</gene>
<evidence type="ECO:0000255" key="1">
    <source>
        <dbReference type="HAMAP-Rule" id="MF_00059"/>
    </source>
</evidence>
<name>RPOA_CERS5</name>